<gene>
    <name type="primary">Cacna1e</name>
    <name type="synonym">Cach6</name>
    <name type="synonym">Cacnl1a6</name>
</gene>
<feature type="chain" id="PRO_0000053941" description="Voltage-dependent R-type calcium channel subunit alpha-1E">
    <location>
        <begin position="1"/>
        <end position="2222"/>
    </location>
</feature>
<feature type="topological domain" description="Cytoplasmic" evidence="4">
    <location>
        <begin position="1"/>
        <end position="40"/>
    </location>
</feature>
<feature type="transmembrane region" description="Helical; Name=S1 of repeat I" evidence="4">
    <location>
        <begin position="41"/>
        <end position="59"/>
    </location>
</feature>
<feature type="topological domain" description="Extracellular" evidence="4">
    <location>
        <begin position="60"/>
        <end position="78"/>
    </location>
</feature>
<feature type="transmembrane region" description="Helical; Name=S2 of repeat I" evidence="4">
    <location>
        <begin position="79"/>
        <end position="97"/>
    </location>
</feature>
<feature type="topological domain" description="Cytoplasmic" evidence="4">
    <location>
        <begin position="98"/>
        <end position="109"/>
    </location>
</feature>
<feature type="transmembrane region" description="Helical; Name=S3 of repeat I" evidence="4">
    <location>
        <begin position="110"/>
        <end position="124"/>
    </location>
</feature>
<feature type="topological domain" description="Extracellular" evidence="4">
    <location>
        <begin position="125"/>
        <end position="136"/>
    </location>
</feature>
<feature type="transmembrane region" description="Helical; Name=S4 of repeat I" evidence="4">
    <location>
        <begin position="137"/>
        <end position="156"/>
    </location>
</feature>
<feature type="topological domain" description="Cytoplasmic" evidence="4">
    <location>
        <begin position="157"/>
        <end position="174"/>
    </location>
</feature>
<feature type="transmembrane region" description="Helical; Name=S5 of repeat I" evidence="4">
    <location>
        <begin position="175"/>
        <end position="195"/>
    </location>
</feature>
<feature type="topological domain" description="Extracellular" evidence="4">
    <location>
        <begin position="196"/>
        <end position="277"/>
    </location>
</feature>
<feature type="transmembrane region" description="Helical; Name=S6 of repeat I" evidence="4">
    <location>
        <begin position="278"/>
        <end position="301"/>
    </location>
</feature>
<feature type="topological domain" description="Cytoplasmic" evidence="4">
    <location>
        <begin position="302"/>
        <end position="427"/>
    </location>
</feature>
<feature type="transmembrane region" description="Helical; Name=S1 of repeat II" evidence="4">
    <location>
        <begin position="428"/>
        <end position="447"/>
    </location>
</feature>
<feature type="topological domain" description="Extracellular" evidence="4">
    <location>
        <begin position="448"/>
        <end position="460"/>
    </location>
</feature>
<feature type="transmembrane region" description="Helical; Name=S2 of repeat II" evidence="4">
    <location>
        <begin position="461"/>
        <end position="480"/>
    </location>
</feature>
<feature type="topological domain" description="Cytoplasmic" evidence="4">
    <location>
        <begin position="481"/>
        <end position="489"/>
    </location>
</feature>
<feature type="transmembrane region" description="Helical; Name=S3 of repeat II" evidence="4">
    <location>
        <begin position="490"/>
        <end position="508"/>
    </location>
</feature>
<feature type="topological domain" description="Extracellular" evidence="4">
    <location>
        <begin position="509"/>
        <end position="518"/>
    </location>
</feature>
<feature type="transmembrane region" description="Helical; Name=S4 of repeat II" evidence="4">
    <location>
        <begin position="519"/>
        <end position="537"/>
    </location>
</feature>
<feature type="topological domain" description="Cytoplasmic" evidence="4">
    <location>
        <begin position="538"/>
        <end position="556"/>
    </location>
</feature>
<feature type="transmembrane region" description="Helical; Name=S5 of repeat II" evidence="4">
    <location>
        <begin position="557"/>
        <end position="576"/>
    </location>
</feature>
<feature type="topological domain" description="Extracellular" evidence="4">
    <location>
        <begin position="577"/>
        <end position="629"/>
    </location>
</feature>
<feature type="transmembrane region" description="Helical; Name=S6 of repeat II" evidence="4">
    <location>
        <begin position="630"/>
        <end position="654"/>
    </location>
</feature>
<feature type="topological domain" description="Cytoplasmic" evidence="4">
    <location>
        <begin position="655"/>
        <end position="1100"/>
    </location>
</feature>
<feature type="transmembrane region" description="Helical; Name=S1 of repeat III" evidence="4">
    <location>
        <begin position="1101"/>
        <end position="1117"/>
    </location>
</feature>
<feature type="topological domain" description="Extracellular" evidence="4">
    <location>
        <begin position="1118"/>
        <end position="1141"/>
    </location>
</feature>
<feature type="transmembrane region" description="Helical; Name=S2 of repeat III" evidence="4">
    <location>
        <begin position="1142"/>
        <end position="1161"/>
    </location>
</feature>
<feature type="topological domain" description="Cytoplasmic" evidence="4">
    <location>
        <begin position="1162"/>
        <end position="1169"/>
    </location>
</feature>
<feature type="transmembrane region" description="Helical; Name=S3 of repeat III" evidence="4">
    <location>
        <begin position="1170"/>
        <end position="1192"/>
    </location>
</feature>
<feature type="topological domain" description="Extracellular" evidence="4">
    <location>
        <begin position="1193"/>
        <end position="1206"/>
    </location>
</feature>
<feature type="transmembrane region" description="Helical; Name=S4 of repeat III" evidence="4">
    <location>
        <begin position="1207"/>
        <end position="1224"/>
    </location>
</feature>
<feature type="topological domain" description="Cytoplasmic" evidence="4">
    <location>
        <begin position="1225"/>
        <end position="1243"/>
    </location>
</feature>
<feature type="transmembrane region" description="Helical; Name=S5 of repeat III" evidence="4">
    <location>
        <begin position="1244"/>
        <end position="1263"/>
    </location>
</feature>
<feature type="topological domain" description="Extracellular" evidence="4">
    <location>
        <begin position="1264"/>
        <end position="1350"/>
    </location>
</feature>
<feature type="transmembrane region" description="Helical; Name=S6 of repeat III" evidence="4">
    <location>
        <begin position="1351"/>
        <end position="1374"/>
    </location>
</feature>
<feature type="topological domain" description="Cytoplasmic" evidence="4">
    <location>
        <begin position="1375"/>
        <end position="1431"/>
    </location>
</feature>
<feature type="transmembrane region" description="Helical; Name=S1 of repeat IV" evidence="4">
    <location>
        <begin position="1432"/>
        <end position="1450"/>
    </location>
</feature>
<feature type="topological domain" description="Extracellular" evidence="4">
    <location>
        <begin position="1451"/>
        <end position="1467"/>
    </location>
</feature>
<feature type="transmembrane region" description="Helical; Name=S2 of repeat IV" evidence="4">
    <location>
        <begin position="1468"/>
        <end position="1485"/>
    </location>
</feature>
<feature type="topological domain" description="Cytoplasmic" evidence="4">
    <location>
        <begin position="1486"/>
        <end position="1493"/>
    </location>
</feature>
<feature type="transmembrane region" description="Helical; Name=S3 of repeat IV" evidence="4">
    <location>
        <begin position="1494"/>
        <end position="1512"/>
    </location>
</feature>
<feature type="topological domain" description="Extracellular" evidence="4">
    <location>
        <begin position="1513"/>
        <end position="1523"/>
    </location>
</feature>
<feature type="transmembrane region" description="Helical; Name=S4 of repeat IV" evidence="4">
    <location>
        <begin position="1524"/>
        <end position="1542"/>
    </location>
</feature>
<feature type="topological domain" description="Cytoplasmic" evidence="4">
    <location>
        <begin position="1543"/>
        <end position="1561"/>
    </location>
</feature>
<feature type="transmembrane region" description="Helical; Name=S5 of repeat IV" evidence="4">
    <location>
        <begin position="1562"/>
        <end position="1581"/>
    </location>
</feature>
<feature type="topological domain" description="Extracellular" evidence="4">
    <location>
        <begin position="1582"/>
        <end position="1650"/>
    </location>
</feature>
<feature type="transmembrane region" description="Helical; Name=S6 of repeat IV" evidence="4">
    <location>
        <begin position="1651"/>
        <end position="1676"/>
    </location>
</feature>
<feature type="topological domain" description="Cytoplasmic" evidence="4">
    <location>
        <begin position="1677"/>
        <end position="2222"/>
    </location>
</feature>
<feature type="repeat" description="I">
    <location>
        <begin position="27"/>
        <end position="305"/>
    </location>
</feature>
<feature type="repeat" description="II">
    <location>
        <begin position="413"/>
        <end position="657"/>
    </location>
</feature>
<feature type="repeat" description="III">
    <location>
        <begin position="1092"/>
        <end position="1378"/>
    </location>
</feature>
<feature type="repeat" description="IV">
    <location>
        <begin position="1415"/>
        <end position="1678"/>
    </location>
</feature>
<feature type="domain" description="EF-hand" evidence="5">
    <location>
        <begin position="1691"/>
        <end position="1726"/>
    </location>
</feature>
<feature type="region of interest" description="Binding to the beta subunit" evidence="1">
    <location>
        <begin position="325"/>
        <end position="342"/>
    </location>
</feature>
<feature type="region of interest" description="Disordered" evidence="6">
    <location>
        <begin position="680"/>
        <end position="727"/>
    </location>
</feature>
<feature type="region of interest" description="Disordered" evidence="6">
    <location>
        <begin position="820"/>
        <end position="944"/>
    </location>
</feature>
<feature type="region of interest" description="Disordered" evidence="6">
    <location>
        <begin position="1042"/>
        <end position="1076"/>
    </location>
</feature>
<feature type="region of interest" description="Disordered" evidence="6">
    <location>
        <begin position="1970"/>
        <end position="2135"/>
    </location>
</feature>
<feature type="compositionally biased region" description="Basic residues" evidence="6">
    <location>
        <begin position="864"/>
        <end position="877"/>
    </location>
</feature>
<feature type="compositionally biased region" description="Low complexity" evidence="6">
    <location>
        <begin position="884"/>
        <end position="896"/>
    </location>
</feature>
<feature type="compositionally biased region" description="Basic and acidic residues" evidence="6">
    <location>
        <begin position="906"/>
        <end position="935"/>
    </location>
</feature>
<feature type="compositionally biased region" description="Basic and acidic residues" evidence="6">
    <location>
        <begin position="1044"/>
        <end position="1055"/>
    </location>
</feature>
<feature type="compositionally biased region" description="Basic and acidic residues" evidence="6">
    <location>
        <begin position="1974"/>
        <end position="1994"/>
    </location>
</feature>
<feature type="compositionally biased region" description="Basic and acidic residues" evidence="6">
    <location>
        <begin position="2010"/>
        <end position="2027"/>
    </location>
</feature>
<feature type="compositionally biased region" description="Low complexity" evidence="6">
    <location>
        <begin position="2046"/>
        <end position="2061"/>
    </location>
</feature>
<feature type="compositionally biased region" description="Polar residues" evidence="6">
    <location>
        <begin position="2104"/>
        <end position="2123"/>
    </location>
</feature>
<feature type="compositionally biased region" description="Low complexity" evidence="6">
    <location>
        <begin position="2124"/>
        <end position="2135"/>
    </location>
</feature>
<feature type="binding site" evidence="8">
    <location>
        <position position="377"/>
    </location>
    <ligand>
        <name>Ca(2+)</name>
        <dbReference type="ChEBI" id="CHEBI:29108"/>
        <label>1</label>
    </ligand>
</feature>
<feature type="binding site" evidence="8">
    <location>
        <position position="379"/>
    </location>
    <ligand>
        <name>Ca(2+)</name>
        <dbReference type="ChEBI" id="CHEBI:29108"/>
        <label>1</label>
    </ligand>
</feature>
<feature type="binding site" evidence="8">
    <location>
        <position position="381"/>
    </location>
    <ligand>
        <name>Ca(2+)</name>
        <dbReference type="ChEBI" id="CHEBI:29108"/>
        <label>1</label>
    </ligand>
</feature>
<feature type="binding site" evidence="8">
    <location>
        <position position="383"/>
    </location>
    <ligand>
        <name>Ca(2+)</name>
        <dbReference type="ChEBI" id="CHEBI:29108"/>
        <label>1</label>
    </ligand>
</feature>
<feature type="binding site" evidence="8">
    <location>
        <position position="1704"/>
    </location>
    <ligand>
        <name>Ca(2+)</name>
        <dbReference type="ChEBI" id="CHEBI:29108"/>
        <label>2</label>
    </ligand>
</feature>
<feature type="binding site" evidence="8">
    <location>
        <position position="1710"/>
    </location>
    <ligand>
        <name>Ca(2+)</name>
        <dbReference type="ChEBI" id="CHEBI:29108"/>
        <label>2</label>
    </ligand>
</feature>
<feature type="binding site" evidence="8">
    <location>
        <position position="1715"/>
    </location>
    <ligand>
        <name>Ca(2+)</name>
        <dbReference type="ChEBI" id="CHEBI:29108"/>
        <label>2</label>
    </ligand>
</feature>
<feature type="site" description="Calcium ion selectivity and permeability" evidence="1">
    <location>
        <position position="260"/>
    </location>
</feature>
<feature type="site" description="Calcium ion selectivity and permeability" evidence="1">
    <location>
        <position position="608"/>
    </location>
</feature>
<feature type="site" description="Calcium ion selectivity and permeability" evidence="1">
    <location>
        <position position="1324"/>
    </location>
</feature>
<feature type="site" description="Calcium ion selectivity and permeability" evidence="1">
    <location>
        <position position="1615"/>
    </location>
</feature>
<feature type="modified residue" description="Phosphoserine" evidence="3">
    <location>
        <position position="378"/>
    </location>
</feature>
<feature type="modified residue" description="Phosphothreonine" evidence="3">
    <location>
        <position position="391"/>
    </location>
</feature>
<feature type="modified residue" description="Phosphoserine" evidence="9">
    <location>
        <position position="687"/>
    </location>
</feature>
<feature type="modified residue" description="Phosphoserine" evidence="3">
    <location>
        <position position="696"/>
    </location>
</feature>
<feature type="modified residue" description="Phosphoserine" evidence="9">
    <location>
        <position position="744"/>
    </location>
</feature>
<feature type="modified residue" description="Phosphoserine" evidence="3">
    <location>
        <position position="766"/>
    </location>
</feature>
<feature type="modified residue" description="Phosphoserine" evidence="9">
    <location>
        <position position="806"/>
    </location>
</feature>
<feature type="modified residue" description="Phosphoserine" evidence="9">
    <location>
        <position position="898"/>
    </location>
</feature>
<feature type="modified residue" description="Phosphoserine" evidence="9">
    <location>
        <position position="1049"/>
    </location>
</feature>
<feature type="modified residue" description="Phosphoserine" evidence="3">
    <location>
        <position position="2003"/>
    </location>
</feature>
<feature type="modified residue" description="Phosphoserine" evidence="9">
    <location>
        <position position="2022"/>
    </location>
</feature>
<feature type="glycosylation site" description="N-linked (GlcNAc...) asparagine" evidence="4">
    <location>
        <position position="205"/>
    </location>
</feature>
<feature type="glycosylation site" description="N-linked (GlcNAc...) asparagine" evidence="4">
    <location>
        <position position="1518"/>
    </location>
</feature>
<feature type="glycosylation site" description="N-linked (GlcNAc...) asparagine" evidence="4">
    <location>
        <position position="1523"/>
    </location>
</feature>
<feature type="glycosylation site" description="N-linked (GlcNAc...) asparagine" evidence="4">
    <location>
        <position position="1641"/>
    </location>
</feature>
<feature type="helix" evidence="10">
    <location>
        <begin position="1818"/>
        <end position="1835"/>
    </location>
</feature>
<sequence length="2222" mass="252116">MALYNPIPVRQNCFTVNRSLFIFGEDNIVRKYAKKLIDWPPFEYMILATIIANCIVLALEQHLPEDDKTPMSRRLEKTEPYFIGIFCFEAGIKIVALGFIFHKGSYLRNGWNVMDFIVVLSGILATAGTHFNTHVDLRTLRAVRVLRPLKLVSGIPSLQIVLKSIMKAMVPLLQIGLLLFFAILMFAIIGLEFYSGKLHRACFMNNSGILEGFDPPHPCGVQGCPAGYECKDWIGPNDGITQFDNILFAVLTVFQCITMEGWTTVLYNTNDALGATWNWLYFIPLIIIGSFFVLNLVLGVLSGEFAKERERVENRRAFMKLRRQQQIERELNGYRAWIDKAEEVMLAEENKNSGTSALEVLRRATIKRSRTEAMTRDSSDEHCVDISSVGTPLARASIKSTKVDGASYFRHKERLLRISIRHMVKSQVFYWIVLSVVALNTACVAIVHHNQPQWLTHLLYYAEFLFLGLFLLEMSLKMYGMGPRLYFHSSFNCFDFGVTVGSIFEVVWAIFRPGTSFGISVLRALRLLRIFKITKYWASLRNLVVSLMSSMKSIISLLFLLFLFIVVFALLGMQLFGGRFNFNDGTPSANFDTFPAAIMTVFQILTGEDWNEVMYNGIRSQGGVSSGMWSAIYFIVLTLFGNYTLLNVFLAIAVDNLANAQELTKDEQEEEEAFNQKHALQKAKEVSPMSAPNMPSIERDRRRRHHMSMWEPRSSHLRERRRRHHMSVWEQRTSQLRRHMQMSSQEALNKEEAPPMNPLNPLNPLSPLNPLNAHPSLYRRPRPIEGLALGLGLEKCEEERISRGGSLKGDIGGLTSVLDNQRSPLSLGKREPPWLPRSCHGNCDPTQQETGGGETVVTFEDRARHRQSQRRSRHRRVRTEGKESASASRSRSASQERSLDEGVSIDGEKEHEPQSSHRSKEPTIHEEERTQDLRRTNSLMVPRGSGLVGALDEAETPLVQPQPELEVGKDAALTEQEAEGSSEQALLADVQLDVGRGISQSEPDLSCMTTNMDKATTESTSVTVAIPDVDPLVDSTVVNISNKTDGEASPLKEAETKEEEEEVEKKKQKKEKRETGKAMVPHSSMFIFSTTNPIRKACHYIVNLRYFEMCILLVIAASSIALAAEDPVLTNSERNKVLRYFDYVFTGVFTFEMVIKMIDQGLILQDGSYFRDLWNILDFVVVVGALVAFALANALGTNKGRDIKTIKSLRVLRVLRPLKTIKRLPKLKAVFDCVVTSLKNVFNILIVYKLFMFIFAVIAVQLFKGKFFYCTDSSKDTEKECIGNYVDHEKNKMEVKGREWKRHEFHYDNIIWALLTLFTVSTGEGWPQVLQHSVDVTEEDRGPSRSNRMEMSIFYVVYFVVFPFFFVNIFVALIIITFQEQGDKMMEECSLEKNERACIDFAISAKPLTRYMPQNRHTFQYRVWHFVVSPSFEYTIMAMIALNTVVLMMKYYSAPWTYELALKYLNIAFTMVFSLECVLKVIAFGFLNYFRDTWNIFDFITVIGSITEIILTDSKLVNTSGFNMSFLKLFRAARLIKLLRQGYTIRILLWTFVQSFKALPYVCLLIAMLFFIYAIIGMQVFGNIKLDEESHINRHNNFRSFFGSLMLLFRSATGEAWQEIMLSCLGEKGCEPDTTAPSGQNESERCGTDLAYVYFVSFIFFCSFLMLNLFVAVIMDNFEYLTRDSSILGPHHLDEFVRVWAEYDRAACGRIHYTEMYEMLTLMSPPLGLGKRCPSKVAYKRLVLMNMPVAEDMTVHFTSTLMALIRTALDIKIAKGGADRQQLDSELQKETLAIWPHLSQKMLDLLVPMPKASDLTVGKIYAAMMIMDYYKQSKVKKQRQQLEEQKNAPMFQRMEPSSLPQEIISNAKALPYLQQDPVSGLSGRSGYPSMSPLSPQEIFQLACMDPADDGQFQEQQSLVVTDPSSMRRSFSTIRDKRSNSSWLEEFSMERSSENTYKSRRRSYHSSLRLSAHRLNSDSGHKSDTHRSGGRERGRSKERKHLLSPDVSRCNSEERGTQADWESPERRQSRSPSEGRSQTPNRQGTGSLSESSIPSISDTSTPRRSRRQLPPVPPKPRPLLSYSSLMRHTGGISPPPDGSEGGSPLASQALESNSACLTESSNSLHPQQGQHPSPQHYISEPYLALHEDSHASDCGEEETLTFEAAVATSLGRSNTIGSAPPLRHSWQMPNGHYRRRRLGGLGLAMMCGAVSDLLSDTEEDDKC</sequence>
<accession>Q07652</accession>
<evidence type="ECO:0000250" key="1"/>
<evidence type="ECO:0000250" key="2">
    <source>
        <dbReference type="UniProtKB" id="Q15878"/>
    </source>
</evidence>
<evidence type="ECO:0000250" key="3">
    <source>
        <dbReference type="UniProtKB" id="Q61290"/>
    </source>
</evidence>
<evidence type="ECO:0000255" key="4"/>
<evidence type="ECO:0000255" key="5">
    <source>
        <dbReference type="PROSITE-ProRule" id="PRU00448"/>
    </source>
</evidence>
<evidence type="ECO:0000256" key="6">
    <source>
        <dbReference type="SAM" id="MobiDB-lite"/>
    </source>
</evidence>
<evidence type="ECO:0000269" key="7">
    <source>
    </source>
</evidence>
<evidence type="ECO:0000305" key="8"/>
<evidence type="ECO:0007744" key="9">
    <source>
    </source>
</evidence>
<evidence type="ECO:0007829" key="10">
    <source>
        <dbReference type="PDB" id="3DVK"/>
    </source>
</evidence>
<proteinExistence type="evidence at protein level"/>
<protein>
    <recommendedName>
        <fullName>Voltage-dependent R-type calcium channel subunit alpha-1E</fullName>
    </recommendedName>
    <alternativeName>
        <fullName>BII</fullName>
    </alternativeName>
    <alternativeName>
        <fullName>Brain calcium channel II</fullName>
    </alternativeName>
    <alternativeName>
        <fullName>Calcium channel, L type, alpha-1 polypeptide, isoform 6</fullName>
    </alternativeName>
    <alternativeName>
        <fullName>RBE-II</fullName>
    </alternativeName>
    <alternativeName>
        <fullName>RBE2</fullName>
    </alternativeName>
    <alternativeName>
        <fullName>Voltage-gated calcium channel subunit alpha Cav2.3</fullName>
    </alternativeName>
</protein>
<organism>
    <name type="scientific">Rattus norvegicus</name>
    <name type="common">Rat</name>
    <dbReference type="NCBI Taxonomy" id="10116"/>
    <lineage>
        <taxon>Eukaryota</taxon>
        <taxon>Metazoa</taxon>
        <taxon>Chordata</taxon>
        <taxon>Craniata</taxon>
        <taxon>Vertebrata</taxon>
        <taxon>Euteleostomi</taxon>
        <taxon>Mammalia</taxon>
        <taxon>Eutheria</taxon>
        <taxon>Euarchontoglires</taxon>
        <taxon>Glires</taxon>
        <taxon>Rodentia</taxon>
        <taxon>Myomorpha</taxon>
        <taxon>Muroidea</taxon>
        <taxon>Muridae</taxon>
        <taxon>Murinae</taxon>
        <taxon>Rattus</taxon>
    </lineage>
</organism>
<keyword id="KW-0002">3D-structure</keyword>
<keyword id="KW-0106">Calcium</keyword>
<keyword id="KW-0107">Calcium channel</keyword>
<keyword id="KW-0109">Calcium transport</keyword>
<keyword id="KW-1015">Disulfide bond</keyword>
<keyword id="KW-0325">Glycoprotein</keyword>
<keyword id="KW-0407">Ion channel</keyword>
<keyword id="KW-0406">Ion transport</keyword>
<keyword id="KW-0472">Membrane</keyword>
<keyword id="KW-0479">Metal-binding</keyword>
<keyword id="KW-0597">Phosphoprotein</keyword>
<keyword id="KW-1185">Reference proteome</keyword>
<keyword id="KW-0677">Repeat</keyword>
<keyword id="KW-0812">Transmembrane</keyword>
<keyword id="KW-1133">Transmembrane helix</keyword>
<keyword id="KW-0813">Transport</keyword>
<keyword id="KW-0851">Voltage-gated channel</keyword>
<name>CAC1E_RAT</name>
<comment type="function">
    <text evidence="7">Voltage-sensitive calcium channels (VSCC) mediate the entry of calcium ions into excitable cells and are also involved in a variety of calcium-dependent processes, including muscle contraction, hormone or neurotransmitter release, gene expression, cell motility, cell division and cell death. The isoform alpha-1E gives rise to R-type calcium currents. R-type calcium channels belong to the 'high-voltage activated' (HVA) group and are blocked by nickel. They are however insensitive to dihydropyridines (DHP). Calcium channels containing alpha-1E subunit could be involved in the modulation of firing patterns of neurons which is important for information processing.</text>
</comment>
<comment type="catalytic activity">
    <reaction evidence="7">
        <text>Ca(2+)(in) = Ca(2+)(out)</text>
        <dbReference type="Rhea" id="RHEA:29671"/>
        <dbReference type="ChEBI" id="CHEBI:29108"/>
    </reaction>
</comment>
<comment type="subunit">
    <text evidence="2">Interacts with EFHC1. Voltage-dependent calcium channels are multisubunit complexes, consisting of alpha-1, alpha-2, beta and delta subunits in a 1:1:1:1 ratio. The channel activity is directed by the pore-forming and voltage-sensitive alpha-1 subunit. In many cases, this subunit is sufficient to generate voltage-sensitive calcium channel activity. The auxiliary subunits beta and alpha-2/delta linked by a disulfide bridge regulate the channel activity.</text>
</comment>
<comment type="interaction">
    <interactant intactId="EBI-15734403">
        <id>Q07652</id>
    </interactant>
    <interactant intactId="EBI-397435">
        <id>P62158</id>
        <label>CALM3</label>
    </interactant>
    <organismsDiffer>true</organismsDiffer>
    <experiments>2</experiments>
</comment>
<comment type="subcellular location">
    <subcellularLocation>
        <location evidence="4">Membrane</location>
        <topology evidence="4">Multi-pass membrane protein</topology>
    </subcellularLocation>
</comment>
<comment type="tissue specificity">
    <text>Expressed in central nervous system and in insulinoma.</text>
</comment>
<comment type="domain">
    <text>Each of the four internal repeats contains five hydrophobic transmembrane segments (S1, S2, S3, S5, S6) and one positively charged transmembrane segment (S4). S4 segments probably represent the voltage-sensor and are characterized by a series of positively charged amino acids at every third position.</text>
</comment>
<comment type="similarity">
    <text evidence="8">Belongs to the calcium channel alpha-1 subunit (TC 1.A.1.11) family. CACNA1E subfamily.</text>
</comment>
<reference key="1">
    <citation type="journal article" date="1993" name="Science">
        <title>Structure and functional expression of a member of the low voltage-activated calcium channel family.</title>
        <authorList>
            <person name="Soong T.W."/>
            <person name="Stea A."/>
            <person name="Hodson C.D."/>
            <person name="Dubel S.J."/>
            <person name="Vincent S.R."/>
            <person name="Snutch T.P."/>
        </authorList>
    </citation>
    <scope>NUCLEOTIDE SEQUENCE [MRNA]</scope>
    <scope>FUNCTION</scope>
    <scope>TRANSPORTER ACTIVITY</scope>
    <source>
        <strain>Sprague-Dawley</strain>
        <tissue>Brain</tissue>
    </source>
</reference>
<reference key="2">
    <citation type="journal article" date="2012" name="Nat. Commun.">
        <title>Quantitative maps of protein phosphorylation sites across 14 different rat organs and tissues.</title>
        <authorList>
            <person name="Lundby A."/>
            <person name="Secher A."/>
            <person name="Lage K."/>
            <person name="Nordsborg N.B."/>
            <person name="Dmytriyev A."/>
            <person name="Lundby C."/>
            <person name="Olsen J.V."/>
        </authorList>
    </citation>
    <scope>PHOSPHORYLATION [LARGE SCALE ANALYSIS] AT SER-687; SER-744; SER-806; SER-898; SER-1049 AND SER-2022</scope>
    <scope>IDENTIFICATION BY MASS SPECTROMETRY [LARGE SCALE ANALYSIS]</scope>
</reference>
<dbReference type="EMBL" id="L15453">
    <property type="protein sequence ID" value="AAA40855.1"/>
    <property type="molecule type" value="mRNA"/>
</dbReference>
<dbReference type="PIR" id="A37490">
    <property type="entry name" value="A37490"/>
</dbReference>
<dbReference type="PDB" id="3DVK">
    <property type="method" value="X-ray"/>
    <property type="resolution" value="2.30 A"/>
    <property type="chains" value="B=1818-1837"/>
</dbReference>
<dbReference type="PDBsum" id="3DVK"/>
<dbReference type="SMR" id="Q07652"/>
<dbReference type="DIP" id="DIP-46236N"/>
<dbReference type="FunCoup" id="Q07652">
    <property type="interactions" value="536"/>
</dbReference>
<dbReference type="IntAct" id="Q07652">
    <property type="interactions" value="2"/>
</dbReference>
<dbReference type="STRING" id="10116.ENSRNOP00000003928"/>
<dbReference type="DrugCentral" id="Q07652"/>
<dbReference type="GuidetoPHARMACOLOGY" id="534"/>
<dbReference type="CarbonylDB" id="Q07652"/>
<dbReference type="GlyCosmos" id="Q07652">
    <property type="glycosylation" value="4 sites, No reported glycans"/>
</dbReference>
<dbReference type="GlyGen" id="Q07652">
    <property type="glycosylation" value="4 sites"/>
</dbReference>
<dbReference type="iPTMnet" id="Q07652"/>
<dbReference type="PhosphoSitePlus" id="Q07652"/>
<dbReference type="PaxDb" id="10116-ENSRNOP00000003928"/>
<dbReference type="UCSC" id="RGD:2246">
    <property type="organism name" value="rat"/>
</dbReference>
<dbReference type="AGR" id="RGD:2246"/>
<dbReference type="RGD" id="2246">
    <property type="gene designation" value="Cacna1e"/>
</dbReference>
<dbReference type="eggNOG" id="KOG2301">
    <property type="taxonomic scope" value="Eukaryota"/>
</dbReference>
<dbReference type="InParanoid" id="Q07652"/>
<dbReference type="PhylomeDB" id="Q07652"/>
<dbReference type="Reactome" id="R-RNO-112308">
    <property type="pathway name" value="Presynaptic depolarization and calcium channel opening"/>
</dbReference>
<dbReference type="Reactome" id="R-RNO-422356">
    <property type="pathway name" value="Regulation of insulin secretion"/>
</dbReference>
<dbReference type="EvolutionaryTrace" id="Q07652"/>
<dbReference type="PRO" id="PR:Q07652"/>
<dbReference type="Proteomes" id="UP000002494">
    <property type="component" value="Unplaced"/>
</dbReference>
<dbReference type="GO" id="GO:0098982">
    <property type="term" value="C:GABA-ergic synapse"/>
    <property type="evidence" value="ECO:0000314"/>
    <property type="project" value="SynGO"/>
</dbReference>
<dbReference type="GO" id="GO:0043025">
    <property type="term" value="C:neuronal cell body"/>
    <property type="evidence" value="ECO:0000318"/>
    <property type="project" value="GO_Central"/>
</dbReference>
<dbReference type="GO" id="GO:0043204">
    <property type="term" value="C:perikaryon"/>
    <property type="evidence" value="ECO:0000314"/>
    <property type="project" value="RGD"/>
</dbReference>
<dbReference type="GO" id="GO:0045211">
    <property type="term" value="C:postsynaptic membrane"/>
    <property type="evidence" value="ECO:0000266"/>
    <property type="project" value="RGD"/>
</dbReference>
<dbReference type="GO" id="GO:0042734">
    <property type="term" value="C:presynaptic membrane"/>
    <property type="evidence" value="ECO:0000266"/>
    <property type="project" value="RGD"/>
</dbReference>
<dbReference type="GO" id="GO:0005891">
    <property type="term" value="C:voltage-gated calcium channel complex"/>
    <property type="evidence" value="ECO:0000314"/>
    <property type="project" value="RGD"/>
</dbReference>
<dbReference type="GO" id="GO:0005509">
    <property type="term" value="F:calcium ion binding"/>
    <property type="evidence" value="ECO:0007669"/>
    <property type="project" value="InterPro"/>
</dbReference>
<dbReference type="GO" id="GO:0008332">
    <property type="term" value="F:low voltage-gated calcium channel activity"/>
    <property type="evidence" value="ECO:0000304"/>
    <property type="project" value="RGD"/>
</dbReference>
<dbReference type="GO" id="GO:0005245">
    <property type="term" value="F:voltage-gated calcium channel activity"/>
    <property type="evidence" value="ECO:0000314"/>
    <property type="project" value="UniProtKB"/>
</dbReference>
<dbReference type="GO" id="GO:0099626">
    <property type="term" value="F:voltage-gated calcium channel activity involved in regulation of presynaptic cytosolic calcium levels"/>
    <property type="evidence" value="ECO:0000314"/>
    <property type="project" value="SynGO"/>
</dbReference>
<dbReference type="GO" id="GO:0022843">
    <property type="term" value="F:voltage-gated monoatomic cation channel activity"/>
    <property type="evidence" value="ECO:0000266"/>
    <property type="project" value="RGD"/>
</dbReference>
<dbReference type="GO" id="GO:0001662">
    <property type="term" value="P:behavioral fear response"/>
    <property type="evidence" value="ECO:0000266"/>
    <property type="project" value="RGD"/>
</dbReference>
<dbReference type="GO" id="GO:0048266">
    <property type="term" value="P:behavioral response to pain"/>
    <property type="evidence" value="ECO:0000266"/>
    <property type="project" value="RGD"/>
</dbReference>
<dbReference type="GO" id="GO:0070509">
    <property type="term" value="P:calcium ion import"/>
    <property type="evidence" value="ECO:0000314"/>
    <property type="project" value="RGD"/>
</dbReference>
<dbReference type="GO" id="GO:0098703">
    <property type="term" value="P:calcium ion import across plasma membrane"/>
    <property type="evidence" value="ECO:0000318"/>
    <property type="project" value="GO_Central"/>
</dbReference>
<dbReference type="GO" id="GO:0070588">
    <property type="term" value="P:calcium ion transmembrane transport"/>
    <property type="evidence" value="ECO:0000266"/>
    <property type="project" value="RGD"/>
</dbReference>
<dbReference type="GO" id="GO:0006816">
    <property type="term" value="P:calcium ion transport"/>
    <property type="evidence" value="ECO:0000266"/>
    <property type="project" value="RGD"/>
</dbReference>
<dbReference type="GO" id="GO:0051649">
    <property type="term" value="P:establishment of localization in cell"/>
    <property type="evidence" value="ECO:0000266"/>
    <property type="project" value="RGD"/>
</dbReference>
<dbReference type="GO" id="GO:0042596">
    <property type="term" value="P:fear response"/>
    <property type="evidence" value="ECO:0000266"/>
    <property type="project" value="RGD"/>
</dbReference>
<dbReference type="GO" id="GO:0030317">
    <property type="term" value="P:flagellated sperm motility"/>
    <property type="evidence" value="ECO:0000266"/>
    <property type="project" value="RGD"/>
</dbReference>
<dbReference type="GO" id="GO:0042593">
    <property type="term" value="P:glucose homeostasis"/>
    <property type="evidence" value="ECO:0000266"/>
    <property type="project" value="RGD"/>
</dbReference>
<dbReference type="GO" id="GO:0007626">
    <property type="term" value="P:locomotory behavior"/>
    <property type="evidence" value="ECO:0000266"/>
    <property type="project" value="RGD"/>
</dbReference>
<dbReference type="GO" id="GO:0050877">
    <property type="term" value="P:nervous system process"/>
    <property type="evidence" value="ECO:0000266"/>
    <property type="project" value="RGD"/>
</dbReference>
<dbReference type="GO" id="GO:0002027">
    <property type="term" value="P:regulation of heart rate"/>
    <property type="evidence" value="ECO:0000266"/>
    <property type="project" value="RGD"/>
</dbReference>
<dbReference type="GO" id="GO:0061178">
    <property type="term" value="P:regulation of insulin secretion involved in cellular response to glucose stimulus"/>
    <property type="evidence" value="ECO:0000266"/>
    <property type="project" value="RGD"/>
</dbReference>
<dbReference type="GO" id="GO:0090273">
    <property type="term" value="P:regulation of somatostatin secretion"/>
    <property type="evidence" value="ECO:0000266"/>
    <property type="project" value="RGD"/>
</dbReference>
<dbReference type="GO" id="GO:2000300">
    <property type="term" value="P:regulation of synaptic vesicle exocytosis"/>
    <property type="evidence" value="ECO:0000314"/>
    <property type="project" value="SynGO"/>
</dbReference>
<dbReference type="GO" id="GO:0048265">
    <property type="term" value="P:response to pain"/>
    <property type="evidence" value="ECO:0000266"/>
    <property type="project" value="RGD"/>
</dbReference>
<dbReference type="GO" id="GO:0019233">
    <property type="term" value="P:sensory perception of pain"/>
    <property type="evidence" value="ECO:0000266"/>
    <property type="project" value="RGD"/>
</dbReference>
<dbReference type="GO" id="GO:0019226">
    <property type="term" value="P:transmission of nerve impulse"/>
    <property type="evidence" value="ECO:0000266"/>
    <property type="project" value="RGD"/>
</dbReference>
<dbReference type="GO" id="GO:0008542">
    <property type="term" value="P:visual learning"/>
    <property type="evidence" value="ECO:0000266"/>
    <property type="project" value="RGD"/>
</dbReference>
<dbReference type="FunFam" id="1.20.120.350:FF:000001">
    <property type="entry name" value="Voltage-dependent L-type calcium channel subunit alpha"/>
    <property type="match status" value="1"/>
</dbReference>
<dbReference type="FunFam" id="1.10.238.10:FF:000063">
    <property type="entry name" value="Voltage-dependent N-type calcium channel subunit alpha"/>
    <property type="match status" value="1"/>
</dbReference>
<dbReference type="FunFam" id="1.20.120.350:FF:000011">
    <property type="entry name" value="Voltage-dependent N-type calcium channel subunit alpha"/>
    <property type="match status" value="1"/>
</dbReference>
<dbReference type="FunFam" id="1.20.120.350:FF:000013">
    <property type="entry name" value="Voltage-dependent N-type calcium channel subunit alpha"/>
    <property type="match status" value="1"/>
</dbReference>
<dbReference type="FunFam" id="1.20.120.350:FF:000015">
    <property type="entry name" value="Voltage-dependent N-type calcium channel subunit alpha"/>
    <property type="match status" value="1"/>
</dbReference>
<dbReference type="FunFam" id="1.10.287.70:FF:000023">
    <property type="entry name" value="Voltage-dependent R-type calcium channel subunit alpha"/>
    <property type="match status" value="1"/>
</dbReference>
<dbReference type="FunFam" id="1.10.287.70:FF:000025">
    <property type="entry name" value="Voltage-dependent R-type calcium channel subunit alpha"/>
    <property type="match status" value="1"/>
</dbReference>
<dbReference type="Gene3D" id="1.10.287.70">
    <property type="match status" value="4"/>
</dbReference>
<dbReference type="Gene3D" id="6.10.250.2180">
    <property type="match status" value="1"/>
</dbReference>
<dbReference type="Gene3D" id="6.10.250.2500">
    <property type="match status" value="1"/>
</dbReference>
<dbReference type="Gene3D" id="1.20.120.350">
    <property type="entry name" value="Voltage-gated potassium channels. Chain C"/>
    <property type="match status" value="4"/>
</dbReference>
<dbReference type="InterPro" id="IPR002048">
    <property type="entry name" value="EF_hand_dom"/>
</dbReference>
<dbReference type="InterPro" id="IPR031649">
    <property type="entry name" value="GPHH_dom"/>
</dbReference>
<dbReference type="InterPro" id="IPR005821">
    <property type="entry name" value="Ion_trans_dom"/>
</dbReference>
<dbReference type="InterPro" id="IPR014873">
    <property type="entry name" value="VDCC_a1su_IQ"/>
</dbReference>
<dbReference type="InterPro" id="IPR050599">
    <property type="entry name" value="VDCC_alpha-1_subunit"/>
</dbReference>
<dbReference type="InterPro" id="IPR005449">
    <property type="entry name" value="VDCC_R_a1su"/>
</dbReference>
<dbReference type="InterPro" id="IPR002077">
    <property type="entry name" value="VDCCAlpha1"/>
</dbReference>
<dbReference type="InterPro" id="IPR027359">
    <property type="entry name" value="Volt_channel_dom_sf"/>
</dbReference>
<dbReference type="PANTHER" id="PTHR45628">
    <property type="entry name" value="VOLTAGE-DEPENDENT CALCIUM CHANNEL TYPE A SUBUNIT ALPHA-1"/>
    <property type="match status" value="1"/>
</dbReference>
<dbReference type="PANTHER" id="PTHR45628:SF5">
    <property type="entry name" value="VOLTAGE-DEPENDENT R-TYPE CALCIUM CHANNEL SUBUNIT ALPHA-1E"/>
    <property type="match status" value="1"/>
</dbReference>
<dbReference type="Pfam" id="PF08763">
    <property type="entry name" value="Ca_chan_IQ"/>
    <property type="match status" value="1"/>
</dbReference>
<dbReference type="Pfam" id="PF16905">
    <property type="entry name" value="GPHH"/>
    <property type="match status" value="1"/>
</dbReference>
<dbReference type="Pfam" id="PF00520">
    <property type="entry name" value="Ion_trans"/>
    <property type="match status" value="4"/>
</dbReference>
<dbReference type="PRINTS" id="PR00167">
    <property type="entry name" value="CACHANNEL"/>
</dbReference>
<dbReference type="PRINTS" id="PR01633">
    <property type="entry name" value="RVDCCALPHA1"/>
</dbReference>
<dbReference type="SMART" id="SM01062">
    <property type="entry name" value="Ca_chan_IQ"/>
    <property type="match status" value="1"/>
</dbReference>
<dbReference type="SUPFAM" id="SSF81324">
    <property type="entry name" value="Voltage-gated potassium channels"/>
    <property type="match status" value="4"/>
</dbReference>
<dbReference type="PROSITE" id="PS50222">
    <property type="entry name" value="EF_HAND_2"/>
    <property type="match status" value="1"/>
</dbReference>